<name>HFLD_VESOH</name>
<dbReference type="EMBL" id="AP009247">
    <property type="protein sequence ID" value="BAF61804.1"/>
    <property type="molecule type" value="Genomic_DNA"/>
</dbReference>
<dbReference type="RefSeq" id="WP_011930074.1">
    <property type="nucleotide sequence ID" value="NC_009465.1"/>
</dbReference>
<dbReference type="SMR" id="A5CW81"/>
<dbReference type="STRING" id="412965.COSY_0692"/>
<dbReference type="KEGG" id="vok:COSY_0692"/>
<dbReference type="eggNOG" id="COG2915">
    <property type="taxonomic scope" value="Bacteria"/>
</dbReference>
<dbReference type="HOGENOM" id="CLU_098920_0_0_6"/>
<dbReference type="OrthoDB" id="9788031at2"/>
<dbReference type="Proteomes" id="UP000000247">
    <property type="component" value="Chromosome"/>
</dbReference>
<dbReference type="GO" id="GO:0005737">
    <property type="term" value="C:cytoplasm"/>
    <property type="evidence" value="ECO:0007669"/>
    <property type="project" value="UniProtKB-SubCell"/>
</dbReference>
<dbReference type="GO" id="GO:0005886">
    <property type="term" value="C:plasma membrane"/>
    <property type="evidence" value="ECO:0007669"/>
    <property type="project" value="UniProtKB-SubCell"/>
</dbReference>
<dbReference type="Gene3D" id="1.10.3890.10">
    <property type="entry name" value="HflD-like"/>
    <property type="match status" value="1"/>
</dbReference>
<dbReference type="HAMAP" id="MF_00695">
    <property type="entry name" value="HflD_protein"/>
    <property type="match status" value="1"/>
</dbReference>
<dbReference type="InterPro" id="IPR007451">
    <property type="entry name" value="HflD"/>
</dbReference>
<dbReference type="InterPro" id="IPR035932">
    <property type="entry name" value="HflD-like_sf"/>
</dbReference>
<dbReference type="NCBIfam" id="NF001246">
    <property type="entry name" value="PRK00218.1-2"/>
    <property type="match status" value="1"/>
</dbReference>
<dbReference type="PANTHER" id="PTHR38100">
    <property type="entry name" value="HIGH FREQUENCY LYSOGENIZATION PROTEIN HFLD"/>
    <property type="match status" value="1"/>
</dbReference>
<dbReference type="PANTHER" id="PTHR38100:SF1">
    <property type="entry name" value="HIGH FREQUENCY LYSOGENIZATION PROTEIN HFLD"/>
    <property type="match status" value="1"/>
</dbReference>
<dbReference type="Pfam" id="PF04356">
    <property type="entry name" value="DUF489"/>
    <property type="match status" value="1"/>
</dbReference>
<dbReference type="SUPFAM" id="SSF101322">
    <property type="entry name" value="YcfC-like"/>
    <property type="match status" value="1"/>
</dbReference>
<evidence type="ECO:0000255" key="1">
    <source>
        <dbReference type="HAMAP-Rule" id="MF_00695"/>
    </source>
</evidence>
<organism>
    <name type="scientific">Vesicomyosocius okutanii subsp. Calyptogena okutanii (strain HA)</name>
    <dbReference type="NCBI Taxonomy" id="412965"/>
    <lineage>
        <taxon>Bacteria</taxon>
        <taxon>Pseudomonadati</taxon>
        <taxon>Pseudomonadota</taxon>
        <taxon>Gammaproteobacteria</taxon>
        <taxon>Candidatus Pseudothioglobaceae</taxon>
        <taxon>Candidatus Vesicomyosocius</taxon>
    </lineage>
</organism>
<protein>
    <recommendedName>
        <fullName evidence="1">High frequency lysogenization protein HflD homolog</fullName>
    </recommendedName>
</protein>
<reference key="1">
    <citation type="journal article" date="2007" name="Curr. Biol.">
        <title>Reduced genome of the thioautotrophic intracellular symbiont in a deep-sea clam, Calyptogena okutanii.</title>
        <authorList>
            <person name="Kuwahara H."/>
            <person name="Yoshida T."/>
            <person name="Takaki Y."/>
            <person name="Shimamura S."/>
            <person name="Nishi S."/>
            <person name="Harada M."/>
            <person name="Matsuyama K."/>
            <person name="Takishita K."/>
            <person name="Kawato M."/>
            <person name="Uematsu K."/>
            <person name="Fujiwara Y."/>
            <person name="Sato T."/>
            <person name="Kato C."/>
            <person name="Kitagawa M."/>
            <person name="Kato I."/>
            <person name="Maruyama T."/>
        </authorList>
    </citation>
    <scope>NUCLEOTIDE SEQUENCE [LARGE SCALE GENOMIC DNA]</scope>
    <source>
        <strain>HA</strain>
    </source>
</reference>
<keyword id="KW-0997">Cell inner membrane</keyword>
<keyword id="KW-1003">Cell membrane</keyword>
<keyword id="KW-0963">Cytoplasm</keyword>
<keyword id="KW-0472">Membrane</keyword>
<keyword id="KW-1185">Reference proteome</keyword>
<feature type="chain" id="PRO_0000390646" description="High frequency lysogenization protein HflD homolog">
    <location>
        <begin position="1"/>
        <end position="203"/>
    </location>
</feature>
<comment type="subcellular location">
    <subcellularLocation>
        <location>Cytoplasm</location>
    </subcellularLocation>
    <subcellularLocation>
        <location evidence="1">Cell inner membrane</location>
        <topology evidence="1">Peripheral membrane protein</topology>
        <orientation evidence="1">Cytoplasmic side</orientation>
    </subcellularLocation>
</comment>
<comment type="similarity">
    <text evidence="1">Belongs to the HflD family.</text>
</comment>
<proteinExistence type="inferred from homology"/>
<accession>A5CW81</accession>
<gene>
    <name evidence="1" type="primary">hflD</name>
    <name type="ordered locus">COSY_0692</name>
</gene>
<sequence length="203" mass="22701">MNKLREQTLALASILQTTTLIDQLASTGTCDANSNQASLKSIITSSTKLEEVFNQKQDLLVGIDALKVVLSNKTKCIQHIIFYALALINLEKKLMKNQTLLNQITLEIDLIRNQDFFEISHINSIARLAQLYKSTLGGLNPKIMINGQQIYLSNKHTSNHIRALLLAGIRAVSLWKSQGGKTWHLLLNKKKILNLINTLEGLN</sequence>